<evidence type="ECO:0000255" key="1">
    <source>
        <dbReference type="HAMAP-Rule" id="MF_00096"/>
    </source>
</evidence>
<sequence length="857" mass="97188">MLTKRFYNLAIMQDISNHTPMIQQYLKIKSQYQDILLFYRMGDFYELFFDDAKKAAELLDITLTARGKSNGESIPMAGVPYHAAEAYIAKIVKKGLSIAICEQTGDPNTSKGPVERQVTRIITPATVSEEAFLDNNQDSILVSIFEKNNKYYLAYTSYTQGKIYLVKTLTSLNELKNTVLKLSPQEIITNSRELAQQNPFKKPIKALEEWYYSNFEAKKYINDSLDTNIANNILNLYKNDQLTTIGSILSYLTNILKDTPRHITDISYEQEQDTLNIDINSRINLELDNNSKSSLLSIIGKCKTSLGSRLLKRYFSNPTRNLNILATRHSIINSLGENQHFLKIQDVLSYISDIERIISRVALGTVKPKDLVALRDSLEQLPILKKLLSEKNTPEITNINNRIHQLDELVTLLDKAIIENPPTTIRDGGVIKEGFDKELDELKSIKDNSYDFLIKFEELQKQKTGISTLKVGYNSVHGYYIELSKQHADKIPTEYVRRQTLKASERYITEELKNFEDKVLSSKEKALAREKLIYDTLLKKVIEYYKQIQETAASIAEIDVLANFAERAIKLKLSQPKFNNLAKLELKEVRHLAIEHNIDEPFIPNDTLLSKDTNTLQIITGPNMGGKSTYMRQVAQLIFLAYIGSFVPASYADICDIDTIYTRIGASDDISSGRSTFMVEMTETAYILNNASAKSLVIMDEIGRGTSTFDGLALAKACAEKFAQIGAFTLFATHYFELTELAKQYPNVCNIHFEAKEYKDNIYFMHKAVTGAAKKSYGIQVAKLAGISQDVLESAKQNLYNLEKKQQLTESTQVQAQFQLEPTTQNPLQQKLDAIDINTITPLEALNILFELKKTLI</sequence>
<proteinExistence type="inferred from homology"/>
<feature type="chain" id="PRO_1000008061" description="DNA mismatch repair protein MutS">
    <location>
        <begin position="1"/>
        <end position="857"/>
    </location>
</feature>
<feature type="binding site" evidence="1">
    <location>
        <begin position="621"/>
        <end position="628"/>
    </location>
    <ligand>
        <name>ATP</name>
        <dbReference type="ChEBI" id="CHEBI:30616"/>
    </ligand>
</feature>
<dbReference type="EMBL" id="AM286280">
    <property type="protein sequence ID" value="CAL09515.1"/>
    <property type="molecule type" value="Genomic_DNA"/>
</dbReference>
<dbReference type="SMR" id="Q14GB1"/>
<dbReference type="KEGG" id="ftf:FTF1499"/>
<dbReference type="HOGENOM" id="CLU_002472_0_2_6"/>
<dbReference type="GO" id="GO:0005829">
    <property type="term" value="C:cytosol"/>
    <property type="evidence" value="ECO:0007669"/>
    <property type="project" value="TreeGrafter"/>
</dbReference>
<dbReference type="GO" id="GO:0005524">
    <property type="term" value="F:ATP binding"/>
    <property type="evidence" value="ECO:0007669"/>
    <property type="project" value="UniProtKB-UniRule"/>
</dbReference>
<dbReference type="GO" id="GO:0140664">
    <property type="term" value="F:ATP-dependent DNA damage sensor activity"/>
    <property type="evidence" value="ECO:0007669"/>
    <property type="project" value="InterPro"/>
</dbReference>
<dbReference type="GO" id="GO:0003684">
    <property type="term" value="F:damaged DNA binding"/>
    <property type="evidence" value="ECO:0007669"/>
    <property type="project" value="UniProtKB-UniRule"/>
</dbReference>
<dbReference type="GO" id="GO:0030983">
    <property type="term" value="F:mismatched DNA binding"/>
    <property type="evidence" value="ECO:0007669"/>
    <property type="project" value="InterPro"/>
</dbReference>
<dbReference type="GO" id="GO:0006298">
    <property type="term" value="P:mismatch repair"/>
    <property type="evidence" value="ECO:0007669"/>
    <property type="project" value="UniProtKB-UniRule"/>
</dbReference>
<dbReference type="FunFam" id="1.10.1420.10:FF:000002">
    <property type="entry name" value="DNA mismatch repair protein MutS"/>
    <property type="match status" value="1"/>
</dbReference>
<dbReference type="FunFam" id="3.40.1170.10:FF:000001">
    <property type="entry name" value="DNA mismatch repair protein MutS"/>
    <property type="match status" value="1"/>
</dbReference>
<dbReference type="FunFam" id="3.40.50.300:FF:000870">
    <property type="entry name" value="MutS protein homolog 4"/>
    <property type="match status" value="1"/>
</dbReference>
<dbReference type="Gene3D" id="1.10.1420.10">
    <property type="match status" value="2"/>
</dbReference>
<dbReference type="Gene3D" id="3.40.1170.10">
    <property type="entry name" value="DNA repair protein MutS, domain I"/>
    <property type="match status" value="1"/>
</dbReference>
<dbReference type="Gene3D" id="3.30.420.110">
    <property type="entry name" value="MutS, connector domain"/>
    <property type="match status" value="1"/>
</dbReference>
<dbReference type="Gene3D" id="3.40.50.300">
    <property type="entry name" value="P-loop containing nucleotide triphosphate hydrolases"/>
    <property type="match status" value="1"/>
</dbReference>
<dbReference type="HAMAP" id="MF_00096">
    <property type="entry name" value="MutS"/>
    <property type="match status" value="1"/>
</dbReference>
<dbReference type="InterPro" id="IPR005748">
    <property type="entry name" value="DNA_mismatch_repair_MutS"/>
</dbReference>
<dbReference type="InterPro" id="IPR007695">
    <property type="entry name" value="DNA_mismatch_repair_MutS-lik_N"/>
</dbReference>
<dbReference type="InterPro" id="IPR017261">
    <property type="entry name" value="DNA_mismatch_repair_MutS/MSH"/>
</dbReference>
<dbReference type="InterPro" id="IPR000432">
    <property type="entry name" value="DNA_mismatch_repair_MutS_C"/>
</dbReference>
<dbReference type="InterPro" id="IPR007861">
    <property type="entry name" value="DNA_mismatch_repair_MutS_clamp"/>
</dbReference>
<dbReference type="InterPro" id="IPR007696">
    <property type="entry name" value="DNA_mismatch_repair_MutS_core"/>
</dbReference>
<dbReference type="InterPro" id="IPR016151">
    <property type="entry name" value="DNA_mismatch_repair_MutS_N"/>
</dbReference>
<dbReference type="InterPro" id="IPR036187">
    <property type="entry name" value="DNA_mismatch_repair_MutS_sf"/>
</dbReference>
<dbReference type="InterPro" id="IPR007860">
    <property type="entry name" value="DNA_mmatch_repair_MutS_con_dom"/>
</dbReference>
<dbReference type="InterPro" id="IPR045076">
    <property type="entry name" value="MutS"/>
</dbReference>
<dbReference type="InterPro" id="IPR036678">
    <property type="entry name" value="MutS_con_dom_sf"/>
</dbReference>
<dbReference type="InterPro" id="IPR027417">
    <property type="entry name" value="P-loop_NTPase"/>
</dbReference>
<dbReference type="NCBIfam" id="TIGR01070">
    <property type="entry name" value="mutS1"/>
    <property type="match status" value="1"/>
</dbReference>
<dbReference type="NCBIfam" id="NF003810">
    <property type="entry name" value="PRK05399.1"/>
    <property type="match status" value="1"/>
</dbReference>
<dbReference type="PANTHER" id="PTHR11361:SF34">
    <property type="entry name" value="DNA MISMATCH REPAIR PROTEIN MSH1, MITOCHONDRIAL"/>
    <property type="match status" value="1"/>
</dbReference>
<dbReference type="PANTHER" id="PTHR11361">
    <property type="entry name" value="DNA MISMATCH REPAIR PROTEIN MUTS FAMILY MEMBER"/>
    <property type="match status" value="1"/>
</dbReference>
<dbReference type="Pfam" id="PF01624">
    <property type="entry name" value="MutS_I"/>
    <property type="match status" value="1"/>
</dbReference>
<dbReference type="Pfam" id="PF05188">
    <property type="entry name" value="MutS_II"/>
    <property type="match status" value="1"/>
</dbReference>
<dbReference type="Pfam" id="PF05192">
    <property type="entry name" value="MutS_III"/>
    <property type="match status" value="1"/>
</dbReference>
<dbReference type="Pfam" id="PF05190">
    <property type="entry name" value="MutS_IV"/>
    <property type="match status" value="1"/>
</dbReference>
<dbReference type="Pfam" id="PF00488">
    <property type="entry name" value="MutS_V"/>
    <property type="match status" value="1"/>
</dbReference>
<dbReference type="PIRSF" id="PIRSF037677">
    <property type="entry name" value="DNA_mis_repair_Msh6"/>
    <property type="match status" value="1"/>
</dbReference>
<dbReference type="SMART" id="SM00534">
    <property type="entry name" value="MUTSac"/>
    <property type="match status" value="1"/>
</dbReference>
<dbReference type="SMART" id="SM00533">
    <property type="entry name" value="MUTSd"/>
    <property type="match status" value="1"/>
</dbReference>
<dbReference type="SUPFAM" id="SSF55271">
    <property type="entry name" value="DNA repair protein MutS, domain I"/>
    <property type="match status" value="1"/>
</dbReference>
<dbReference type="SUPFAM" id="SSF53150">
    <property type="entry name" value="DNA repair protein MutS, domain II"/>
    <property type="match status" value="1"/>
</dbReference>
<dbReference type="SUPFAM" id="SSF48334">
    <property type="entry name" value="DNA repair protein MutS, domain III"/>
    <property type="match status" value="1"/>
</dbReference>
<dbReference type="SUPFAM" id="SSF52540">
    <property type="entry name" value="P-loop containing nucleoside triphosphate hydrolases"/>
    <property type="match status" value="1"/>
</dbReference>
<dbReference type="PROSITE" id="PS00486">
    <property type="entry name" value="DNA_MISMATCH_REPAIR_2"/>
    <property type="match status" value="1"/>
</dbReference>
<reference key="1">
    <citation type="journal article" date="2007" name="PLoS ONE">
        <title>Genome sequencing shows that European isolates of Francisella tularensis subspecies tularensis are almost identical to US laboratory strain Schu S4.</title>
        <authorList>
            <person name="Chaudhuri R.R."/>
            <person name="Ren C.-P."/>
            <person name="Desmond L."/>
            <person name="Vincent G.A."/>
            <person name="Silman N.J."/>
            <person name="Brehm J.K."/>
            <person name="Elmore M.J."/>
            <person name="Hudson M.J."/>
            <person name="Forsman M."/>
            <person name="Isherwood K.E."/>
            <person name="Gurycova D."/>
            <person name="Minton N.P."/>
            <person name="Titball R.W."/>
            <person name="Pallen M.J."/>
            <person name="Vipond R."/>
        </authorList>
    </citation>
    <scope>NUCLEOTIDE SEQUENCE [LARGE SCALE GENOMIC DNA]</scope>
    <source>
        <strain>FSC 198</strain>
    </source>
</reference>
<protein>
    <recommendedName>
        <fullName evidence="1">DNA mismatch repair protein MutS</fullName>
    </recommendedName>
</protein>
<gene>
    <name evidence="1" type="primary">mutS</name>
    <name type="ordered locus">FTF1499</name>
</gene>
<keyword id="KW-0067">ATP-binding</keyword>
<keyword id="KW-0227">DNA damage</keyword>
<keyword id="KW-0234">DNA repair</keyword>
<keyword id="KW-0238">DNA-binding</keyword>
<keyword id="KW-0547">Nucleotide-binding</keyword>
<name>MUTS_FRAT1</name>
<accession>Q14GB1</accession>
<comment type="function">
    <text evidence="1">This protein is involved in the repair of mismatches in DNA. It is possible that it carries out the mismatch recognition step. This protein has a weak ATPase activity.</text>
</comment>
<comment type="similarity">
    <text evidence="1">Belongs to the DNA mismatch repair MutS family.</text>
</comment>
<organism>
    <name type="scientific">Francisella tularensis subsp. tularensis (strain FSC 198)</name>
    <dbReference type="NCBI Taxonomy" id="393115"/>
    <lineage>
        <taxon>Bacteria</taxon>
        <taxon>Pseudomonadati</taxon>
        <taxon>Pseudomonadota</taxon>
        <taxon>Gammaproteobacteria</taxon>
        <taxon>Thiotrichales</taxon>
        <taxon>Francisellaceae</taxon>
        <taxon>Francisella</taxon>
    </lineage>
</organism>